<dbReference type="EMBL" id="DS027686">
    <property type="protein sequence ID" value="EAW24187.1"/>
    <property type="molecule type" value="Genomic_DNA"/>
</dbReference>
<dbReference type="RefSeq" id="XP_001266084.1">
    <property type="nucleotide sequence ID" value="XM_001266083.1"/>
</dbReference>
<dbReference type="SMR" id="A1CZL7"/>
<dbReference type="STRING" id="331117.A1CZL7"/>
<dbReference type="EnsemblFungi" id="EAW24187">
    <property type="protein sequence ID" value="EAW24187"/>
    <property type="gene ID" value="NFIA_037610"/>
</dbReference>
<dbReference type="GeneID" id="4592778"/>
<dbReference type="KEGG" id="nfi:NFIA_037610"/>
<dbReference type="VEuPathDB" id="FungiDB:NFIA_037610"/>
<dbReference type="eggNOG" id="KOG1628">
    <property type="taxonomic scope" value="Eukaryota"/>
</dbReference>
<dbReference type="HOGENOM" id="CLU_062507_0_0_1"/>
<dbReference type="OMA" id="TRFKGHE"/>
<dbReference type="OrthoDB" id="9834376at2759"/>
<dbReference type="Proteomes" id="UP000006702">
    <property type="component" value="Unassembled WGS sequence"/>
</dbReference>
<dbReference type="GO" id="GO:0022627">
    <property type="term" value="C:cytosolic small ribosomal subunit"/>
    <property type="evidence" value="ECO:0007669"/>
    <property type="project" value="UniProtKB-UniRule"/>
</dbReference>
<dbReference type="GO" id="GO:0003735">
    <property type="term" value="F:structural constituent of ribosome"/>
    <property type="evidence" value="ECO:0007669"/>
    <property type="project" value="UniProtKB-UniRule"/>
</dbReference>
<dbReference type="GO" id="GO:0006412">
    <property type="term" value="P:translation"/>
    <property type="evidence" value="ECO:0007669"/>
    <property type="project" value="UniProtKB-UniRule"/>
</dbReference>
<dbReference type="HAMAP" id="MF_03122">
    <property type="entry name" value="Ribosomal_eS1_euk"/>
    <property type="match status" value="1"/>
</dbReference>
<dbReference type="InterPro" id="IPR001593">
    <property type="entry name" value="Ribosomal_eS1"/>
</dbReference>
<dbReference type="InterPro" id="IPR018281">
    <property type="entry name" value="Ribosomal_eS1_CS"/>
</dbReference>
<dbReference type="InterPro" id="IPR027500">
    <property type="entry name" value="Ribosomal_eS1_euk"/>
</dbReference>
<dbReference type="PANTHER" id="PTHR11830">
    <property type="entry name" value="40S RIBOSOMAL PROTEIN S3A"/>
    <property type="match status" value="1"/>
</dbReference>
<dbReference type="Pfam" id="PF01015">
    <property type="entry name" value="Ribosomal_S3Ae"/>
    <property type="match status" value="1"/>
</dbReference>
<dbReference type="SMART" id="SM01397">
    <property type="entry name" value="Ribosomal_S3Ae"/>
    <property type="match status" value="1"/>
</dbReference>
<dbReference type="PROSITE" id="PS01191">
    <property type="entry name" value="RIBOSOMAL_S3AE"/>
    <property type="match status" value="1"/>
</dbReference>
<protein>
    <recommendedName>
        <fullName evidence="1">Small ribosomal subunit protein eS1</fullName>
    </recommendedName>
    <alternativeName>
        <fullName evidence="3">40S ribosomal protein S1</fullName>
    </alternativeName>
</protein>
<feature type="initiator methionine" description="Removed" evidence="1">
    <location>
        <position position="1"/>
    </location>
</feature>
<feature type="chain" id="PRO_0000389388" description="Small ribosomal subunit protein eS1">
    <location>
        <begin position="2"/>
        <end position="256"/>
    </location>
</feature>
<feature type="region of interest" description="Disordered" evidence="2">
    <location>
        <begin position="1"/>
        <end position="21"/>
    </location>
</feature>
<feature type="compositionally biased region" description="Basic residues" evidence="2">
    <location>
        <begin position="1"/>
        <end position="18"/>
    </location>
</feature>
<feature type="modified residue" description="N-acetylalanine; partial" evidence="1">
    <location>
        <position position="2"/>
    </location>
</feature>
<keyword id="KW-0007">Acetylation</keyword>
<keyword id="KW-0963">Cytoplasm</keyword>
<keyword id="KW-1185">Reference proteome</keyword>
<keyword id="KW-0687">Ribonucleoprotein</keyword>
<keyword id="KW-0689">Ribosomal protein</keyword>
<evidence type="ECO:0000255" key="1">
    <source>
        <dbReference type="HAMAP-Rule" id="MF_03122"/>
    </source>
</evidence>
<evidence type="ECO:0000256" key="2">
    <source>
        <dbReference type="SAM" id="MobiDB-lite"/>
    </source>
</evidence>
<evidence type="ECO:0000305" key="3"/>
<organism>
    <name type="scientific">Neosartorya fischeri (strain ATCC 1020 / DSM 3700 / CBS 544.65 / FGSC A1164 / JCM 1740 / NRRL 181 / WB 181)</name>
    <name type="common">Aspergillus fischerianus</name>
    <dbReference type="NCBI Taxonomy" id="331117"/>
    <lineage>
        <taxon>Eukaryota</taxon>
        <taxon>Fungi</taxon>
        <taxon>Dikarya</taxon>
        <taxon>Ascomycota</taxon>
        <taxon>Pezizomycotina</taxon>
        <taxon>Eurotiomycetes</taxon>
        <taxon>Eurotiomycetidae</taxon>
        <taxon>Eurotiales</taxon>
        <taxon>Aspergillaceae</taxon>
        <taxon>Aspergillus</taxon>
        <taxon>Aspergillus subgen. Fumigati</taxon>
    </lineage>
</organism>
<gene>
    <name type="primary">rps1</name>
    <name type="ORF">NFIA_037610</name>
</gene>
<accession>A1CZL7</accession>
<comment type="subunit">
    <text evidence="1">Component of the small ribosomal subunit. Mature ribosomes consist of a small (40S) and a large (60S) subunit. The 40S subunit contains about 33 different proteins and 1 molecule of RNA (18S). The 60S subunit contains about 49 different proteins and 3 molecules of RNA (25S, 5.8S and 5S).</text>
</comment>
<comment type="subcellular location">
    <subcellularLocation>
        <location evidence="1">Cytoplasm</location>
    </subcellularLocation>
</comment>
<comment type="similarity">
    <text evidence="1">Belongs to the eukaryotic ribosomal protein eS1 family.</text>
</comment>
<proteinExistence type="inferred from homology"/>
<reference key="1">
    <citation type="journal article" date="2008" name="PLoS Genet.">
        <title>Genomic islands in the pathogenic filamentous fungus Aspergillus fumigatus.</title>
        <authorList>
            <person name="Fedorova N.D."/>
            <person name="Khaldi N."/>
            <person name="Joardar V.S."/>
            <person name="Maiti R."/>
            <person name="Amedeo P."/>
            <person name="Anderson M.J."/>
            <person name="Crabtree J."/>
            <person name="Silva J.C."/>
            <person name="Badger J.H."/>
            <person name="Albarraq A."/>
            <person name="Angiuoli S."/>
            <person name="Bussey H."/>
            <person name="Bowyer P."/>
            <person name="Cotty P.J."/>
            <person name="Dyer P.S."/>
            <person name="Egan A."/>
            <person name="Galens K."/>
            <person name="Fraser-Liggett C.M."/>
            <person name="Haas B.J."/>
            <person name="Inman J.M."/>
            <person name="Kent R."/>
            <person name="Lemieux S."/>
            <person name="Malavazi I."/>
            <person name="Orvis J."/>
            <person name="Roemer T."/>
            <person name="Ronning C.M."/>
            <person name="Sundaram J.P."/>
            <person name="Sutton G."/>
            <person name="Turner G."/>
            <person name="Venter J.C."/>
            <person name="White O.R."/>
            <person name="Whitty B.R."/>
            <person name="Youngman P."/>
            <person name="Wolfe K.H."/>
            <person name="Goldman G.H."/>
            <person name="Wortman J.R."/>
            <person name="Jiang B."/>
            <person name="Denning D.W."/>
            <person name="Nierman W.C."/>
        </authorList>
    </citation>
    <scope>NUCLEOTIDE SEQUENCE [LARGE SCALE GENOMIC DNA]</scope>
    <source>
        <strain>ATCC 1020 / DSM 3700 / CBS 544.65 / FGSC A1164 / JCM 1740 / NRRL 181 / WB 181</strain>
    </source>
</reference>
<name>RS3A_NEOFI</name>
<sequence length="256" mass="29201">MAVGKNKRLSKGKKGVKKRTVDPFSRKDEYSVKAPSTFQIRDVGKTLVNRTSGLKNANDSLKGRIFEVSLADLQNDEDHAFRKVKLRVDEVQGKNCLTNFHGLDFTTDKLRSLVRKWQSLIEANVTVKTTDDYLLRLFAIAFTKRRPNQIKKTTYARSSQIRAIRKKMIEIMQREAASCSLAQLTHKLIPEVIGREIEKATQGIYPLQNVHIRKVKLLKAPKFDLGALLNLHGESTTDDKGHKVEREFKEQVLESV</sequence>